<protein>
    <recommendedName>
        <fullName>Sensory rhodopsin I transducer</fullName>
    </recommendedName>
    <alternativeName>
        <fullName>HTR-I</fullName>
    </alternativeName>
    <alternativeName>
        <fullName>Methyl-accepting phototaxis protein I</fullName>
        <shortName>MPP-I</shortName>
    </alternativeName>
</protein>
<name>HTR1_HALSA</name>
<reference key="1">
    <citation type="journal article" date="1992" name="Proc. Natl. Acad. Sci. U.S.A.">
        <title>Primary structure of an archaebacterial transducer, a methyl-accepting protein associated with sensory rhodopsin I.</title>
        <authorList>
            <person name="Yao V.J."/>
            <person name="Spudich J.L."/>
        </authorList>
    </citation>
    <scope>NUCLEOTIDE SEQUENCE [GENOMIC DNA]</scope>
    <scope>PROTEIN SEQUENCE OF 2-11; 351-378 AND 458-477</scope>
    <scope>FUNCTION</scope>
    <source>
        <strain>Flx5R</strain>
    </source>
</reference>
<reference key="2">
    <citation type="journal article" date="2000" name="Proc. Natl. Acad. Sci. U.S.A.">
        <title>Genome sequence of Halobacterium species NRC-1.</title>
        <authorList>
            <person name="Ng W.V."/>
            <person name="Kennedy S.P."/>
            <person name="Mahairas G.G."/>
            <person name="Berquist B."/>
            <person name="Pan M."/>
            <person name="Shukla H.D."/>
            <person name="Lasky S.R."/>
            <person name="Baliga N.S."/>
            <person name="Thorsson V."/>
            <person name="Sbrogna J."/>
            <person name="Swartzell S."/>
            <person name="Weir D."/>
            <person name="Hall J."/>
            <person name="Dahl T.A."/>
            <person name="Welti R."/>
            <person name="Goo Y.A."/>
            <person name="Leithauser B."/>
            <person name="Keller K."/>
            <person name="Cruz R."/>
            <person name="Danson M.J."/>
            <person name="Hough D.W."/>
            <person name="Maddocks D.G."/>
            <person name="Jablonski P.E."/>
            <person name="Krebs M.P."/>
            <person name="Angevine C.M."/>
            <person name="Dale H."/>
            <person name="Isenbarger T.A."/>
            <person name="Peck R.F."/>
            <person name="Pohlschroder M."/>
            <person name="Spudich J.L."/>
            <person name="Jung K.-H."/>
            <person name="Alam M."/>
            <person name="Freitas T."/>
            <person name="Hou S."/>
            <person name="Daniels C.J."/>
            <person name="Dennis P.P."/>
            <person name="Omer A.D."/>
            <person name="Ebhardt H."/>
            <person name="Lowe T.M."/>
            <person name="Liang P."/>
            <person name="Riley M."/>
            <person name="Hood L."/>
            <person name="DasSarma S."/>
        </authorList>
    </citation>
    <scope>NUCLEOTIDE SEQUENCE [LARGE SCALE GENOMIC DNA]</scope>
    <source>
        <strain>ATCC 700922 / JCM 11081 / NRC-1</strain>
    </source>
</reference>
<comment type="function">
    <text evidence="6">Transduces signals from the phototaxis receptor sensory rhodopsin I (SR-I) to the flagellar motor. Responds to light changes through the variation of the level of methylation.</text>
</comment>
<comment type="subcellular location">
    <subcellularLocation>
        <location evidence="7">Cell membrane</location>
        <topology evidence="7">Multi-pass membrane protein</topology>
    </subcellularLocation>
</comment>
<comment type="PTM">
    <text evidence="1">Methylated by CheR.</text>
</comment>
<comment type="similarity">
    <text evidence="7">Belongs to the methyl-accepting chemotaxis (MCP) protein family.</text>
</comment>
<dbReference type="EMBL" id="L05603">
    <property type="protein sequence ID" value="AAA72315.1"/>
    <property type="molecule type" value="Genomic_DNA"/>
</dbReference>
<dbReference type="EMBL" id="AE004437">
    <property type="protein sequence ID" value="AAG19913.1"/>
    <property type="molecule type" value="Genomic_DNA"/>
</dbReference>
<dbReference type="PIR" id="A47190">
    <property type="entry name" value="A47190"/>
</dbReference>
<dbReference type="PIR" id="E84318">
    <property type="entry name" value="E84318"/>
</dbReference>
<dbReference type="RefSeq" id="WP_010903210.1">
    <property type="nucleotide sequence ID" value="NC_002607.1"/>
</dbReference>
<dbReference type="SMR" id="P0DMI3"/>
<dbReference type="STRING" id="64091.VNG_1659G"/>
<dbReference type="PaxDb" id="64091-VNG_1659G"/>
<dbReference type="GeneID" id="68694326"/>
<dbReference type="KEGG" id="hal:VNG_1659G"/>
<dbReference type="PATRIC" id="fig|64091.14.peg.1264"/>
<dbReference type="HOGENOM" id="CLU_000445_107_18_2"/>
<dbReference type="InParanoid" id="P0DMI3"/>
<dbReference type="OrthoDB" id="8523at2157"/>
<dbReference type="PhylomeDB" id="P0DMI3"/>
<dbReference type="Proteomes" id="UP000000554">
    <property type="component" value="Chromosome"/>
</dbReference>
<dbReference type="GO" id="GO:0005886">
    <property type="term" value="C:plasma membrane"/>
    <property type="evidence" value="ECO:0007669"/>
    <property type="project" value="UniProtKB-SubCell"/>
</dbReference>
<dbReference type="GO" id="GO:0009881">
    <property type="term" value="F:photoreceptor activity"/>
    <property type="evidence" value="ECO:0007669"/>
    <property type="project" value="UniProtKB-KW"/>
</dbReference>
<dbReference type="GO" id="GO:0004888">
    <property type="term" value="F:transmembrane signaling receptor activity"/>
    <property type="evidence" value="ECO:0007669"/>
    <property type="project" value="InterPro"/>
</dbReference>
<dbReference type="GO" id="GO:0006935">
    <property type="term" value="P:chemotaxis"/>
    <property type="evidence" value="ECO:0000318"/>
    <property type="project" value="GO_Central"/>
</dbReference>
<dbReference type="GO" id="GO:0007165">
    <property type="term" value="P:signal transduction"/>
    <property type="evidence" value="ECO:0007669"/>
    <property type="project" value="UniProtKB-KW"/>
</dbReference>
<dbReference type="CDD" id="cd06225">
    <property type="entry name" value="HAMP"/>
    <property type="match status" value="2"/>
</dbReference>
<dbReference type="CDD" id="cd11386">
    <property type="entry name" value="MCP_signal"/>
    <property type="match status" value="1"/>
</dbReference>
<dbReference type="Gene3D" id="6.10.250.1910">
    <property type="match status" value="1"/>
</dbReference>
<dbReference type="Gene3D" id="1.10.287.950">
    <property type="entry name" value="Methyl-accepting chemotaxis protein"/>
    <property type="match status" value="1"/>
</dbReference>
<dbReference type="InterPro" id="IPR004090">
    <property type="entry name" value="Chemotax_Me-accpt_rcpt"/>
</dbReference>
<dbReference type="InterPro" id="IPR003660">
    <property type="entry name" value="HAMP_dom"/>
</dbReference>
<dbReference type="InterPro" id="IPR004089">
    <property type="entry name" value="MCPsignal_dom"/>
</dbReference>
<dbReference type="PANTHER" id="PTHR32089:SF112">
    <property type="entry name" value="LYSOZYME-LIKE PROTEIN-RELATED"/>
    <property type="match status" value="1"/>
</dbReference>
<dbReference type="PANTHER" id="PTHR32089">
    <property type="entry name" value="METHYL-ACCEPTING CHEMOTAXIS PROTEIN MCPB"/>
    <property type="match status" value="1"/>
</dbReference>
<dbReference type="Pfam" id="PF00672">
    <property type="entry name" value="HAMP"/>
    <property type="match status" value="2"/>
</dbReference>
<dbReference type="Pfam" id="PF00015">
    <property type="entry name" value="MCPsignal"/>
    <property type="match status" value="1"/>
</dbReference>
<dbReference type="PRINTS" id="PR00260">
    <property type="entry name" value="CHEMTRNSDUCR"/>
</dbReference>
<dbReference type="SMART" id="SM00304">
    <property type="entry name" value="HAMP"/>
    <property type="match status" value="3"/>
</dbReference>
<dbReference type="SMART" id="SM00283">
    <property type="entry name" value="MA"/>
    <property type="match status" value="1"/>
</dbReference>
<dbReference type="SUPFAM" id="SSF158472">
    <property type="entry name" value="HAMP domain-like"/>
    <property type="match status" value="1"/>
</dbReference>
<dbReference type="SUPFAM" id="SSF58104">
    <property type="entry name" value="Methyl-accepting chemotaxis protein (MCP) signaling domain"/>
    <property type="match status" value="1"/>
</dbReference>
<dbReference type="PROSITE" id="PS50111">
    <property type="entry name" value="CHEMOTAXIS_TRANSDUC_2"/>
    <property type="match status" value="1"/>
</dbReference>
<dbReference type="PROSITE" id="PS50885">
    <property type="entry name" value="HAMP"/>
    <property type="match status" value="2"/>
</dbReference>
<keyword id="KW-1003">Cell membrane</keyword>
<keyword id="KW-0157">Chromophore</keyword>
<keyword id="KW-0903">Direct protein sequencing</keyword>
<keyword id="KW-0472">Membrane</keyword>
<keyword id="KW-0488">Methylation</keyword>
<keyword id="KW-0600">Photoreceptor protein</keyword>
<keyword id="KW-0675">Receptor</keyword>
<keyword id="KW-1185">Reference proteome</keyword>
<keyword id="KW-0677">Repeat</keyword>
<keyword id="KW-0716">Sensory transduction</keyword>
<keyword id="KW-0807">Transducer</keyword>
<keyword id="KW-0812">Transmembrane</keyword>
<keyword id="KW-1133">Transmembrane helix</keyword>
<organism>
    <name type="scientific">Halobacterium salinarum (strain ATCC 700922 / JCM 11081 / NRC-1)</name>
    <name type="common">Halobacterium halobium</name>
    <dbReference type="NCBI Taxonomy" id="64091"/>
    <lineage>
        <taxon>Archaea</taxon>
        <taxon>Methanobacteriati</taxon>
        <taxon>Methanobacteriota</taxon>
        <taxon>Stenosarchaea group</taxon>
        <taxon>Halobacteria</taxon>
        <taxon>Halobacteriales</taxon>
        <taxon>Halobacteriaceae</taxon>
        <taxon>Halobacterium</taxon>
        <taxon>Halobacterium salinarum NRC-34001</taxon>
    </lineage>
</organism>
<sequence length="536" mass="56675">MTIAWARRRYGVKLGLGYIATAGLLVGVGVTTNDVPSTIVAGIAGLLTLGSINAAETVASIKEIAAQTERVANGNLEQEVTSTRTDEFGSLADSIEQMRQSLRGRLNEMERTRADLEETQAEAETAREEAEQAKQEAQAAEREARELAATYQDTAKRYGETMEAAATGDLTQRVDVDTDHEAMETVGTAFNQMMDDLQATVRTVTTVADEIEAKTERMSETSADIEASAGDTVEAVSKIESQANDQRTELDSAADDVQQVSASAEEIAATIDDLASRSEDVATASDAARDSSKSALDEMSSIETEVDDAVGQVEQLRDQVAEITDIVDVITDIGEQTNMLALNASIEAARAGGNADGDGFSVVADEVKDLAEETQDRANEIAAVVEKVTAQTEDVTASIQQTRTRVESGSETVESTLRDIRTIADSIAEVSNSIDEIQRTTSEQAETVQSTATSVERVAGLSDDTTALASDAESAVIGQRESAEEIAASLEQFQNTAVEQLQSRVASFTVATEDSETAGGSVEQPVMRAGADGGGA</sequence>
<evidence type="ECO:0000250" key="1"/>
<evidence type="ECO:0000255" key="2"/>
<evidence type="ECO:0000255" key="3">
    <source>
        <dbReference type="PROSITE-ProRule" id="PRU00102"/>
    </source>
</evidence>
<evidence type="ECO:0000255" key="4">
    <source>
        <dbReference type="PROSITE-ProRule" id="PRU00284"/>
    </source>
</evidence>
<evidence type="ECO:0000256" key="5">
    <source>
        <dbReference type="SAM" id="MobiDB-lite"/>
    </source>
</evidence>
<evidence type="ECO:0000269" key="6">
    <source>
    </source>
</evidence>
<evidence type="ECO:0000305" key="7"/>
<accession>P0DMI3</accession>
<accession>P33741</accession>
<accession>P33955</accession>
<accession>Q9HPF6</accession>
<gene>
    <name type="primary">htr1</name>
    <name type="synonym">htr</name>
    <name type="synonym">htrI</name>
    <name type="ordered locus">VNG_1659G</name>
</gene>
<proteinExistence type="evidence at protein level"/>
<feature type="initiator methionine" description="Removed" evidence="6">
    <location>
        <position position="1"/>
    </location>
</feature>
<feature type="chain" id="PRO_0000110548" description="Sensory rhodopsin I transducer">
    <location>
        <begin position="2"/>
        <end position="536"/>
    </location>
</feature>
<feature type="topological domain" description="Cytoplasmic" evidence="2">
    <location>
        <begin position="2"/>
        <end position="14"/>
    </location>
</feature>
<feature type="transmembrane region" description="Helical" evidence="2">
    <location>
        <begin position="15"/>
        <end position="29"/>
    </location>
</feature>
<feature type="topological domain" description="Extracellular" evidence="2">
    <location>
        <begin position="30"/>
        <end position="39"/>
    </location>
</feature>
<feature type="transmembrane region" description="Helical" evidence="2">
    <location>
        <begin position="40"/>
        <end position="55"/>
    </location>
</feature>
<feature type="topological domain" description="Cytoplasmic" evidence="2">
    <location>
        <begin position="56"/>
        <end position="536"/>
    </location>
</feature>
<feature type="domain" description="HAMP 1" evidence="3">
    <location>
        <begin position="55"/>
        <end position="107"/>
    </location>
</feature>
<feature type="domain" description="HAMP 2" evidence="3">
    <location>
        <begin position="149"/>
        <end position="202"/>
    </location>
</feature>
<feature type="domain" description="Methyl-accepting transducer" evidence="4">
    <location>
        <begin position="221"/>
        <end position="459"/>
    </location>
</feature>
<feature type="region of interest" description="Disordered" evidence="5">
    <location>
        <begin position="116"/>
        <end position="145"/>
    </location>
</feature>
<feature type="region of interest" description="Disordered" evidence="5">
    <location>
        <begin position="278"/>
        <end position="307"/>
    </location>
</feature>
<feature type="region of interest" description="Disordered" evidence="5">
    <location>
        <begin position="512"/>
        <end position="536"/>
    </location>
</feature>
<feature type="compositionally biased region" description="Basic and acidic residues" evidence="5">
    <location>
        <begin position="124"/>
        <end position="145"/>
    </location>
</feature>
<feature type="compositionally biased region" description="Basic and acidic residues" evidence="5">
    <location>
        <begin position="287"/>
        <end position="296"/>
    </location>
</feature>
<feature type="modified residue" description="Glutamate methyl ester (Glu)" evidence="1">
    <location>
        <position position="266"/>
    </location>
</feature>
<feature type="modified residue" description="Glutamate methyl ester (Glu)" evidence="1">
    <location>
        <position position="473"/>
    </location>
</feature>